<keyword id="KW-0010">Activator</keyword>
<keyword id="KW-0217">Developmental protein</keyword>
<keyword id="KW-0238">DNA-binding</keyword>
<keyword id="KW-0539">Nucleus</keyword>
<keyword id="KW-1185">Reference proteome</keyword>
<keyword id="KW-0677">Repeat</keyword>
<keyword id="KW-0804">Transcription</keyword>
<keyword id="KW-0805">Transcription regulation</keyword>
<proteinExistence type="evidence at protein level"/>
<accession>Q96276</accession>
<accession>O49760</accession>
<dbReference type="EMBL" id="Z68158">
    <property type="protein sequence ID" value="CAA92281.1"/>
    <property type="molecule type" value="mRNA"/>
</dbReference>
<dbReference type="EMBL" id="AY519631">
    <property type="protein sequence ID" value="AAS10101.1"/>
    <property type="molecule type" value="mRNA"/>
</dbReference>
<dbReference type="EMBL" id="AB006702">
    <property type="protein sequence ID" value="BAB11588.1"/>
    <property type="molecule type" value="Genomic_DNA"/>
</dbReference>
<dbReference type="EMBL" id="CP002688">
    <property type="protein sequence ID" value="AED94534.1"/>
    <property type="molecule type" value="Genomic_DNA"/>
</dbReference>
<dbReference type="EMBL" id="BT025285">
    <property type="protein sequence ID" value="ABF19038.1"/>
    <property type="molecule type" value="mRNA"/>
</dbReference>
<dbReference type="EMBL" id="Z95747">
    <property type="protein sequence ID" value="CAB09179.1"/>
    <property type="molecule type" value="mRNA"/>
</dbReference>
<dbReference type="PIR" id="T52283">
    <property type="entry name" value="T52283"/>
</dbReference>
<dbReference type="RefSeq" id="NP_198849.1">
    <property type="nucleotide sequence ID" value="NM_123397.3"/>
</dbReference>
<dbReference type="SMR" id="Q96276"/>
<dbReference type="BioGRID" id="19282">
    <property type="interactions" value="11"/>
</dbReference>
<dbReference type="IntAct" id="Q96276">
    <property type="interactions" value="6"/>
</dbReference>
<dbReference type="STRING" id="3702.Q96276"/>
<dbReference type="PaxDb" id="3702-AT5G40330.1"/>
<dbReference type="EnsemblPlants" id="AT5G40330.1">
    <property type="protein sequence ID" value="AT5G40330.1"/>
    <property type="gene ID" value="AT5G40330"/>
</dbReference>
<dbReference type="GeneID" id="834031"/>
<dbReference type="Gramene" id="AT5G40330.1">
    <property type="protein sequence ID" value="AT5G40330.1"/>
    <property type="gene ID" value="AT5G40330"/>
</dbReference>
<dbReference type="KEGG" id="ath:AT5G40330"/>
<dbReference type="Araport" id="AT5G40330"/>
<dbReference type="TAIR" id="AT5G40330">
    <property type="gene designation" value="MYB23"/>
</dbReference>
<dbReference type="eggNOG" id="KOG0048">
    <property type="taxonomic scope" value="Eukaryota"/>
</dbReference>
<dbReference type="HOGENOM" id="CLU_028567_25_8_1"/>
<dbReference type="InParanoid" id="Q96276"/>
<dbReference type="OMA" id="QGHWNRI"/>
<dbReference type="OrthoDB" id="2143914at2759"/>
<dbReference type="PhylomeDB" id="Q96276"/>
<dbReference type="PRO" id="PR:Q96276"/>
<dbReference type="Proteomes" id="UP000006548">
    <property type="component" value="Chromosome 5"/>
</dbReference>
<dbReference type="ExpressionAtlas" id="Q96276">
    <property type="expression patterns" value="baseline and differential"/>
</dbReference>
<dbReference type="GO" id="GO:0005634">
    <property type="term" value="C:nucleus"/>
    <property type="evidence" value="ECO:0000314"/>
    <property type="project" value="TAIR"/>
</dbReference>
<dbReference type="GO" id="GO:0003700">
    <property type="term" value="F:DNA-binding transcription factor activity"/>
    <property type="evidence" value="ECO:0000250"/>
    <property type="project" value="TAIR"/>
</dbReference>
<dbReference type="GO" id="GO:0000976">
    <property type="term" value="F:transcription cis-regulatory region binding"/>
    <property type="evidence" value="ECO:0000353"/>
    <property type="project" value="TAIR"/>
</dbReference>
<dbReference type="GO" id="GO:0006355">
    <property type="term" value="P:regulation of DNA-templated transcription"/>
    <property type="evidence" value="ECO:0000304"/>
    <property type="project" value="TAIR"/>
</dbReference>
<dbReference type="GO" id="GO:0010053">
    <property type="term" value="P:root epidermal cell differentiation"/>
    <property type="evidence" value="ECO:0000315"/>
    <property type="project" value="TAIR"/>
</dbReference>
<dbReference type="GO" id="GO:0010091">
    <property type="term" value="P:trichome branching"/>
    <property type="evidence" value="ECO:0000315"/>
    <property type="project" value="TAIR"/>
</dbReference>
<dbReference type="GO" id="GO:0010026">
    <property type="term" value="P:trichome differentiation"/>
    <property type="evidence" value="ECO:0000315"/>
    <property type="project" value="TAIR"/>
</dbReference>
<dbReference type="CDD" id="cd00167">
    <property type="entry name" value="SANT"/>
    <property type="match status" value="2"/>
</dbReference>
<dbReference type="FunFam" id="1.10.10.60:FF:000001">
    <property type="entry name" value="MYB-related transcription factor"/>
    <property type="match status" value="1"/>
</dbReference>
<dbReference type="FunFam" id="1.10.10.60:FF:000353">
    <property type="entry name" value="Transcription factor WER"/>
    <property type="match status" value="1"/>
</dbReference>
<dbReference type="Gene3D" id="1.10.10.60">
    <property type="entry name" value="Homeodomain-like"/>
    <property type="match status" value="2"/>
</dbReference>
<dbReference type="InterPro" id="IPR009057">
    <property type="entry name" value="Homeodomain-like_sf"/>
</dbReference>
<dbReference type="InterPro" id="IPR017930">
    <property type="entry name" value="Myb_dom"/>
</dbReference>
<dbReference type="InterPro" id="IPR015495">
    <property type="entry name" value="Myb_TF_plants"/>
</dbReference>
<dbReference type="InterPro" id="IPR001005">
    <property type="entry name" value="SANT/Myb"/>
</dbReference>
<dbReference type="PANTHER" id="PTHR47999">
    <property type="entry name" value="TRANSCRIPTION FACTOR MYB8-RELATED-RELATED"/>
    <property type="match status" value="1"/>
</dbReference>
<dbReference type="PANTHER" id="PTHR47999:SF59">
    <property type="entry name" value="TRANSCRIPTION FACTOR WER-LIKE"/>
    <property type="match status" value="1"/>
</dbReference>
<dbReference type="Pfam" id="PF00249">
    <property type="entry name" value="Myb_DNA-binding"/>
    <property type="match status" value="2"/>
</dbReference>
<dbReference type="SMART" id="SM00717">
    <property type="entry name" value="SANT"/>
    <property type="match status" value="2"/>
</dbReference>
<dbReference type="SUPFAM" id="SSF46689">
    <property type="entry name" value="Homeodomain-like"/>
    <property type="match status" value="1"/>
</dbReference>
<dbReference type="PROSITE" id="PS51294">
    <property type="entry name" value="HTH_MYB"/>
    <property type="match status" value="2"/>
</dbReference>
<protein>
    <recommendedName>
        <fullName>Transcription factor MYB23</fullName>
    </recommendedName>
    <alternativeName>
        <fullName>Myb-related protein 23</fullName>
        <shortName>AtMYB23</shortName>
    </alternativeName>
</protein>
<organism>
    <name type="scientific">Arabidopsis thaliana</name>
    <name type="common">Mouse-ear cress</name>
    <dbReference type="NCBI Taxonomy" id="3702"/>
    <lineage>
        <taxon>Eukaryota</taxon>
        <taxon>Viridiplantae</taxon>
        <taxon>Streptophyta</taxon>
        <taxon>Embryophyta</taxon>
        <taxon>Tracheophyta</taxon>
        <taxon>Spermatophyta</taxon>
        <taxon>Magnoliopsida</taxon>
        <taxon>eudicotyledons</taxon>
        <taxon>Gunneridae</taxon>
        <taxon>Pentapetalae</taxon>
        <taxon>rosids</taxon>
        <taxon>malvids</taxon>
        <taxon>Brassicales</taxon>
        <taxon>Brassicaceae</taxon>
        <taxon>Camelineae</taxon>
        <taxon>Arabidopsis</taxon>
    </lineage>
</organism>
<sequence length="219" mass="24943">MRMTRDGKEHEYKKGLWTVEEDKILMDYVRTHGQGHWNRIAKKTGLKRCGKSCRLRWMNYLSPNVNRGNFTDQEEDLIIRLHKLLGNRWSLIAKRVPGRTDNQVKNYWNTHLSKKLGLGDHSTAVKAACGVESPPSMALITTTSSSHQEISGGKNSTLRFDTLVDESKLKPKSKLVHATPTDVEVAATVPNLFDTFWVLEDDFELSSLTMMDFTNGYCL</sequence>
<evidence type="ECO:0000255" key="1">
    <source>
        <dbReference type="PROSITE-ProRule" id="PRU00625"/>
    </source>
</evidence>
<evidence type="ECO:0000269" key="2">
    <source>
    </source>
</evidence>
<evidence type="ECO:0000269" key="3">
    <source>
    </source>
</evidence>
<evidence type="ECO:0000269" key="4">
    <source>
    </source>
</evidence>
<evidence type="ECO:0000269" key="5">
    <source>
    </source>
</evidence>
<evidence type="ECO:0000305" key="6"/>
<reference key="1">
    <citation type="journal article" date="2001" name="Dev. Biol.">
        <title>Ectopic expression of the Arabidopsis AtMYB23 gene induces differentiation of trichome cells.</title>
        <authorList>
            <person name="Kirik V."/>
            <person name="Schnittger A."/>
            <person name="Radchuk V."/>
            <person name="Adler K."/>
            <person name="Huelskamp M."/>
            <person name="Baeumlein H."/>
        </authorList>
    </citation>
    <scope>NUCLEOTIDE SEQUENCE [MRNA]</scope>
    <scope>FUNCTION</scope>
    <scope>DEVELOPMENTAL STAGE</scope>
    <scope>TISSUE SPECIFICITY</scope>
    <source>
        <strain>cv. Landsberg erecta</strain>
        <tissue>Silique</tissue>
    </source>
</reference>
<reference key="2">
    <citation type="submission" date="2004-01" db="EMBL/GenBank/DDBJ databases">
        <title>The MYB transcription factor family in Arabidopsis: a genome-wide cloning and expression pattern analysis.</title>
        <authorList>
            <person name="Qu L.-J."/>
            <person name="Gu H."/>
        </authorList>
    </citation>
    <scope>NUCLEOTIDE SEQUENCE [MRNA]</scope>
</reference>
<reference key="3">
    <citation type="journal article" date="1997" name="DNA Res.">
        <title>Structural analysis of Arabidopsis thaliana chromosome 5. II. Sequence features of the regions of 1,044,062 bp covered by thirteen physically assigned P1 clones.</title>
        <authorList>
            <person name="Kotani H."/>
            <person name="Nakamura Y."/>
            <person name="Sato S."/>
            <person name="Kaneko T."/>
            <person name="Asamizu E."/>
            <person name="Miyajima N."/>
            <person name="Tabata S."/>
        </authorList>
    </citation>
    <scope>NUCLEOTIDE SEQUENCE [LARGE SCALE GENOMIC DNA]</scope>
    <source>
        <strain>cv. Columbia</strain>
    </source>
</reference>
<reference key="4">
    <citation type="journal article" date="2017" name="Plant J.">
        <title>Araport11: a complete reannotation of the Arabidopsis thaliana reference genome.</title>
        <authorList>
            <person name="Cheng C.Y."/>
            <person name="Krishnakumar V."/>
            <person name="Chan A.P."/>
            <person name="Thibaud-Nissen F."/>
            <person name="Schobel S."/>
            <person name="Town C.D."/>
        </authorList>
    </citation>
    <scope>GENOME REANNOTATION</scope>
    <source>
        <strain>cv. Columbia</strain>
    </source>
</reference>
<reference key="5">
    <citation type="submission" date="2006-04" db="EMBL/GenBank/DDBJ databases">
        <title>Arabidopsis ORF clones.</title>
        <authorList>
            <person name="Shinn P."/>
            <person name="Chen H."/>
            <person name="Kim C.J."/>
            <person name="Ecker J.R."/>
        </authorList>
    </citation>
    <scope>NUCLEOTIDE SEQUENCE [LARGE SCALE MRNA]</scope>
    <source>
        <strain>cv. Columbia</strain>
    </source>
</reference>
<reference key="6">
    <citation type="submission" date="1997-05" db="EMBL/GenBank/DDBJ databases">
        <title>One hundred R2R3-MYB genes in the genome of Arabidopsis thaliana.</title>
        <authorList>
            <person name="Romero I."/>
            <person name="Fuertes A."/>
            <person name="Benito M.J."/>
            <person name="Malpica J."/>
            <person name="Leyva A."/>
            <person name="Paz-Ares J."/>
        </authorList>
    </citation>
    <scope>NUCLEOTIDE SEQUENCE [MRNA] OF 55-99</scope>
    <source>
        <strain>cv. Landsberg erecta</strain>
    </source>
</reference>
<reference key="7">
    <citation type="journal article" date="2001" name="Curr. Opin. Plant Biol.">
        <title>The R2R3-MYB gene family in Arabidopsis thaliana.</title>
        <authorList>
            <person name="Stracke R."/>
            <person name="Werber M."/>
            <person name="Weisshaar B."/>
        </authorList>
    </citation>
    <scope>GENE FAMILY</scope>
    <scope>NOMENCLATURE</scope>
</reference>
<reference key="8">
    <citation type="journal article" date="2004" name="Plant J.">
        <title>Comprehensive identification of Arabidopsis thaliana MYB transcription factors interacting with R/B-like BHLH proteins.</title>
        <authorList>
            <person name="Zimmermann I.M."/>
            <person name="Heim M.A."/>
            <person name="Weisshaar B."/>
            <person name="Uhrig J.F."/>
        </authorList>
    </citation>
    <scope>FUNCTION</scope>
    <scope>INTERACTION WITH BHLH2 AND BHLH12</scope>
</reference>
<reference key="9">
    <citation type="journal article" date="2005" name="Plant Cell Physiol.">
        <title>A chimeric AtMYB23 repressor induces hairy roots, elongation of leaves and stems, and inhibition of the deposition of mucilage on seed coats in Arabidopsis.</title>
        <authorList>
            <person name="Matsui K."/>
            <person name="Hiratsu K."/>
            <person name="Koyama T."/>
            <person name="Tanaka H."/>
            <person name="Ohme-Takagi M."/>
        </authorList>
    </citation>
    <scope>FUNCTION</scope>
</reference>
<reference key="10">
    <citation type="journal article" date="2005" name="Development">
        <title>Functional diversification of MYB23 and GL1 genes in trichome morphogenesis and initiation.</title>
        <authorList>
            <person name="Kirik V."/>
            <person name="Lee M.M."/>
            <person name="Wester K."/>
            <person name="Herrmann U."/>
            <person name="Zheng Z."/>
            <person name="Oppenheimer D."/>
            <person name="Schiefelbein J."/>
            <person name="Hulskamp M."/>
        </authorList>
    </citation>
    <scope>FUNCTION</scope>
    <scope>INTERACTION WITH GL3</scope>
    <scope>DEVELOPMENTAL STAGE</scope>
</reference>
<reference key="11">
    <citation type="journal article" date="2006" name="Plant Mol. Biol.">
        <title>The MYB transcription factor superfamily of Arabidopsis: expression analysis and phylogenetic comparison with the rice MYB family.</title>
        <authorList>
            <person name="Chen Y."/>
            <person name="Yang X."/>
            <person name="He K."/>
            <person name="Liu M."/>
            <person name="Li J."/>
            <person name="Gao Z."/>
            <person name="Lin Z."/>
            <person name="Zhang Y."/>
            <person name="Wang X."/>
            <person name="Qiu X."/>
            <person name="Shen Y."/>
            <person name="Zhang L."/>
            <person name="Deng X."/>
            <person name="Luo J."/>
            <person name="Deng X.-W."/>
            <person name="Chen Z."/>
            <person name="Gu H."/>
            <person name="Qu L.-J."/>
        </authorList>
    </citation>
    <scope>GENE FAMILY</scope>
</reference>
<name>MYB23_ARATH</name>
<gene>
    <name type="primary">MYB23</name>
    <name type="ordered locus">At5g40330</name>
    <name type="ORF">MPO12.5</name>
</gene>
<feature type="chain" id="PRO_0000285270" description="Transcription factor MYB23">
    <location>
        <begin position="1"/>
        <end position="219"/>
    </location>
</feature>
<feature type="domain" description="HTH myb-type 1" evidence="1">
    <location>
        <begin position="9"/>
        <end position="61"/>
    </location>
</feature>
<feature type="domain" description="HTH myb-type 2" evidence="1">
    <location>
        <begin position="62"/>
        <end position="116"/>
    </location>
</feature>
<feature type="DNA-binding region" description="H-T-H motif" evidence="1">
    <location>
        <begin position="37"/>
        <end position="61"/>
    </location>
</feature>
<feature type="DNA-binding region" description="H-T-H motif" evidence="1">
    <location>
        <begin position="89"/>
        <end position="112"/>
    </location>
</feature>
<feature type="sequence conflict" description="In Ref. 6; CAB09179." evidence="6" ref="6">
    <original>K</original>
    <variation>R</variation>
    <location>
        <position position="83"/>
    </location>
</feature>
<comment type="function">
    <text evidence="2 3 4 5">Transcription activator, when associated with BHLH2/EGL3/MYC146 or BHLH12/MYC1. Regulates the epidermal cell fate specification. Mediates the formation of columellae and accumulation of mucilages on seed coats. Controls the elongation of epidermal cells positively in roots but negatively in stems, leading to the promotion of primary roots elongation and repression of leaves and stems elongation, respectively. Ovoids ectopic root-hair formation, probably by inducing GL2 in roots. Controls trichome initiation and branching.</text>
</comment>
<comment type="subunit">
    <text evidence="3 5">Interacts with BHLH2/EGL3/MYC146, BHLH12/MYC1 and GL3.</text>
</comment>
<comment type="subcellular location">
    <subcellularLocation>
        <location evidence="1">Nucleus</location>
    </subcellularLocation>
</comment>
<comment type="tissue specificity">
    <text evidence="2">Expressed in roots, seed coats, leaves, stems and flowers. Detected specifically in trichomes, and in the cell division and differentiation zone of the root.</text>
</comment>
<comment type="developmental stage">
    <text evidence="2 5">First expressed in leaf primordia. Later confined to developing trichome cells where it persists at high levels throughout all stages of trichome development.</text>
</comment>